<organism>
    <name type="scientific">Rattus norvegicus</name>
    <name type="common">Rat</name>
    <dbReference type="NCBI Taxonomy" id="10116"/>
    <lineage>
        <taxon>Eukaryota</taxon>
        <taxon>Metazoa</taxon>
        <taxon>Chordata</taxon>
        <taxon>Craniata</taxon>
        <taxon>Vertebrata</taxon>
        <taxon>Euteleostomi</taxon>
        <taxon>Mammalia</taxon>
        <taxon>Eutheria</taxon>
        <taxon>Euarchontoglires</taxon>
        <taxon>Glires</taxon>
        <taxon>Rodentia</taxon>
        <taxon>Myomorpha</taxon>
        <taxon>Muroidea</taxon>
        <taxon>Muridae</taxon>
        <taxon>Murinae</taxon>
        <taxon>Rattus</taxon>
    </lineage>
</organism>
<reference key="1">
    <citation type="journal article" date="2004" name="Nature">
        <title>Genome sequence of the Brown Norway rat yields insights into mammalian evolution.</title>
        <authorList>
            <person name="Gibbs R.A."/>
            <person name="Weinstock G.M."/>
            <person name="Metzker M.L."/>
            <person name="Muzny D.M."/>
            <person name="Sodergren E.J."/>
            <person name="Scherer S."/>
            <person name="Scott G."/>
            <person name="Steffen D."/>
            <person name="Worley K.C."/>
            <person name="Burch P.E."/>
            <person name="Okwuonu G."/>
            <person name="Hines S."/>
            <person name="Lewis L."/>
            <person name="Deramo C."/>
            <person name="Delgado O."/>
            <person name="Dugan-Rocha S."/>
            <person name="Miner G."/>
            <person name="Morgan M."/>
            <person name="Hawes A."/>
            <person name="Gill R."/>
            <person name="Holt R.A."/>
            <person name="Adams M.D."/>
            <person name="Amanatides P.G."/>
            <person name="Baden-Tillson H."/>
            <person name="Barnstead M."/>
            <person name="Chin S."/>
            <person name="Evans C.A."/>
            <person name="Ferriera S."/>
            <person name="Fosler C."/>
            <person name="Glodek A."/>
            <person name="Gu Z."/>
            <person name="Jennings D."/>
            <person name="Kraft C.L."/>
            <person name="Nguyen T."/>
            <person name="Pfannkoch C.M."/>
            <person name="Sitter C."/>
            <person name="Sutton G.G."/>
            <person name="Venter J.C."/>
            <person name="Woodage T."/>
            <person name="Smith D."/>
            <person name="Lee H.-M."/>
            <person name="Gustafson E."/>
            <person name="Cahill P."/>
            <person name="Kana A."/>
            <person name="Doucette-Stamm L."/>
            <person name="Weinstock K."/>
            <person name="Fechtel K."/>
            <person name="Weiss R.B."/>
            <person name="Dunn D.M."/>
            <person name="Green E.D."/>
            <person name="Blakesley R.W."/>
            <person name="Bouffard G.G."/>
            <person name="De Jong P.J."/>
            <person name="Osoegawa K."/>
            <person name="Zhu B."/>
            <person name="Marra M."/>
            <person name="Schein J."/>
            <person name="Bosdet I."/>
            <person name="Fjell C."/>
            <person name="Jones S."/>
            <person name="Krzywinski M."/>
            <person name="Mathewson C."/>
            <person name="Siddiqui A."/>
            <person name="Wye N."/>
            <person name="McPherson J."/>
            <person name="Zhao S."/>
            <person name="Fraser C.M."/>
            <person name="Shetty J."/>
            <person name="Shatsman S."/>
            <person name="Geer K."/>
            <person name="Chen Y."/>
            <person name="Abramzon S."/>
            <person name="Nierman W.C."/>
            <person name="Havlak P.H."/>
            <person name="Chen R."/>
            <person name="Durbin K.J."/>
            <person name="Egan A."/>
            <person name="Ren Y."/>
            <person name="Song X.-Z."/>
            <person name="Li B."/>
            <person name="Liu Y."/>
            <person name="Qin X."/>
            <person name="Cawley S."/>
            <person name="Cooney A.J."/>
            <person name="D'Souza L.M."/>
            <person name="Martin K."/>
            <person name="Wu J.Q."/>
            <person name="Gonzalez-Garay M.L."/>
            <person name="Jackson A.R."/>
            <person name="Kalafus K.J."/>
            <person name="McLeod M.P."/>
            <person name="Milosavljevic A."/>
            <person name="Virk D."/>
            <person name="Volkov A."/>
            <person name="Wheeler D.A."/>
            <person name="Zhang Z."/>
            <person name="Bailey J.A."/>
            <person name="Eichler E.E."/>
            <person name="Tuzun E."/>
            <person name="Birney E."/>
            <person name="Mongin E."/>
            <person name="Ureta-Vidal A."/>
            <person name="Woodwark C."/>
            <person name="Zdobnov E."/>
            <person name="Bork P."/>
            <person name="Suyama M."/>
            <person name="Torrents D."/>
            <person name="Alexandersson M."/>
            <person name="Trask B.J."/>
            <person name="Young J.M."/>
            <person name="Huang H."/>
            <person name="Wang H."/>
            <person name="Xing H."/>
            <person name="Daniels S."/>
            <person name="Gietzen D."/>
            <person name="Schmidt J."/>
            <person name="Stevens K."/>
            <person name="Vitt U."/>
            <person name="Wingrove J."/>
            <person name="Camara F."/>
            <person name="Mar Alba M."/>
            <person name="Abril J.F."/>
            <person name="Guigo R."/>
            <person name="Smit A."/>
            <person name="Dubchak I."/>
            <person name="Rubin E.M."/>
            <person name="Couronne O."/>
            <person name="Poliakov A."/>
            <person name="Huebner N."/>
            <person name="Ganten D."/>
            <person name="Goesele C."/>
            <person name="Hummel O."/>
            <person name="Kreitler T."/>
            <person name="Lee Y.-A."/>
            <person name="Monti J."/>
            <person name="Schulz H."/>
            <person name="Zimdahl H."/>
            <person name="Himmelbauer H."/>
            <person name="Lehrach H."/>
            <person name="Jacob H.J."/>
            <person name="Bromberg S."/>
            <person name="Gullings-Handley J."/>
            <person name="Jensen-Seaman M.I."/>
            <person name="Kwitek A.E."/>
            <person name="Lazar J."/>
            <person name="Pasko D."/>
            <person name="Tonellato P.J."/>
            <person name="Twigger S."/>
            <person name="Ponting C.P."/>
            <person name="Duarte J.M."/>
            <person name="Rice S."/>
            <person name="Goodstadt L."/>
            <person name="Beatson S.A."/>
            <person name="Emes R.D."/>
            <person name="Winter E.E."/>
            <person name="Webber C."/>
            <person name="Brandt P."/>
            <person name="Nyakatura G."/>
            <person name="Adetobi M."/>
            <person name="Chiaromonte F."/>
            <person name="Elnitski L."/>
            <person name="Eswara P."/>
            <person name="Hardison R.C."/>
            <person name="Hou M."/>
            <person name="Kolbe D."/>
            <person name="Makova K."/>
            <person name="Miller W."/>
            <person name="Nekrutenko A."/>
            <person name="Riemer C."/>
            <person name="Schwartz S."/>
            <person name="Taylor J."/>
            <person name="Yang S."/>
            <person name="Zhang Y."/>
            <person name="Lindpaintner K."/>
            <person name="Andrews T.D."/>
            <person name="Caccamo M."/>
            <person name="Clamp M."/>
            <person name="Clarke L."/>
            <person name="Curwen V."/>
            <person name="Durbin R.M."/>
            <person name="Eyras E."/>
            <person name="Searle S.M."/>
            <person name="Cooper G.M."/>
            <person name="Batzoglou S."/>
            <person name="Brudno M."/>
            <person name="Sidow A."/>
            <person name="Stone E.A."/>
            <person name="Payseur B.A."/>
            <person name="Bourque G."/>
            <person name="Lopez-Otin C."/>
            <person name="Puente X.S."/>
            <person name="Chakrabarti K."/>
            <person name="Chatterji S."/>
            <person name="Dewey C."/>
            <person name="Pachter L."/>
            <person name="Bray N."/>
            <person name="Yap V.B."/>
            <person name="Caspi A."/>
            <person name="Tesler G."/>
            <person name="Pevzner P.A."/>
            <person name="Haussler D."/>
            <person name="Roskin K.M."/>
            <person name="Baertsch R."/>
            <person name="Clawson H."/>
            <person name="Furey T.S."/>
            <person name="Hinrichs A.S."/>
            <person name="Karolchik D."/>
            <person name="Kent W.J."/>
            <person name="Rosenbloom K.R."/>
            <person name="Trumbower H."/>
            <person name="Weirauch M."/>
            <person name="Cooper D.N."/>
            <person name="Stenson P.D."/>
            <person name="Ma B."/>
            <person name="Brent M."/>
            <person name="Arumugam M."/>
            <person name="Shteynberg D."/>
            <person name="Copley R.R."/>
            <person name="Taylor M.S."/>
            <person name="Riethman H."/>
            <person name="Mudunuri U."/>
            <person name="Peterson J."/>
            <person name="Guyer M."/>
            <person name="Felsenfeld A."/>
            <person name="Old S."/>
            <person name="Mockrin S."/>
            <person name="Collins F.S."/>
        </authorList>
    </citation>
    <scope>NUCLEOTIDE SEQUENCE [LARGE SCALE GENOMIC DNA]</scope>
    <source>
        <strain>Brown Norway</strain>
    </source>
</reference>
<reference key="2">
    <citation type="journal article" date="2004" name="Genome Res.">
        <title>The status, quality, and expansion of the NIH full-length cDNA project: the Mammalian Gene Collection (MGC).</title>
        <authorList>
            <consortium name="The MGC Project Team"/>
        </authorList>
    </citation>
    <scope>NUCLEOTIDE SEQUENCE [LARGE SCALE MRNA] OF 1-289</scope>
</reference>
<reference key="3">
    <citation type="journal article" date="2009" name="Neuron">
        <title>GOSPEL: a neuroprotective protein that binds to GAPDH upon S-nitrosylation.</title>
        <authorList>
            <person name="Sen N."/>
            <person name="Hara M.R."/>
            <person name="Ahmad A.S."/>
            <person name="Cascio M.B."/>
            <person name="Kamiya A."/>
            <person name="Ehmsen J.T."/>
            <person name="Agrawal N."/>
            <person name="Hester L."/>
            <person name="Dore S."/>
            <person name="Snyder S.H."/>
            <person name="Sawa A."/>
        </authorList>
    </citation>
    <scope>FUNCTION</scope>
    <scope>SUBCELLULAR LOCATION</scope>
    <scope>TISSUE SPECIFICITY</scope>
    <scope>INTERACTION WITH GAPDH</scope>
    <scope>S-NITROSYLATION AT CYS-47</scope>
    <scope>MUTAGENESIS OF CYS-47</scope>
</reference>
<reference key="4">
    <citation type="journal article" date="2012" name="Nat. Commun.">
        <title>Quantitative maps of protein phosphorylation sites across 14 different rat organs and tissues.</title>
        <authorList>
            <person name="Lundby A."/>
            <person name="Secher A."/>
            <person name="Lage K."/>
            <person name="Nordsborg N.B."/>
            <person name="Dmytriyev A."/>
            <person name="Lundby C."/>
            <person name="Olsen J.V."/>
        </authorList>
    </citation>
    <scope>PHOSPHORYLATION [LARGE SCALE ANALYSIS] AT SER-7</scope>
    <scope>IDENTIFICATION BY MASS SPECTROMETRY [LARGE SCALE ANALYSIS]</scope>
</reference>
<reference key="5">
    <citation type="journal article" date="2018" name="Elife">
        <title>A pathway for Parkinson's Disease LRRK2 kinase to block primary cilia and Sonic hedgehog signaling in the brain.</title>
        <authorList>
            <person name="Dhekne H.S."/>
            <person name="Yanatori I."/>
            <person name="Gomez R.C."/>
            <person name="Tonelli F."/>
            <person name="Diez F."/>
            <person name="Schuele B."/>
            <person name="Steger M."/>
            <person name="Alessi D.R."/>
            <person name="Pfeffer S.R."/>
        </authorList>
    </citation>
    <scope>SUBCELLULAR LOCATION</scope>
</reference>
<dbReference type="EMBL" id="CK357616">
    <property type="status" value="NOT_ANNOTATED_CDS"/>
    <property type="molecule type" value="mRNA"/>
</dbReference>
<dbReference type="EMBL" id="CK600354">
    <property type="status" value="NOT_ANNOTATED_CDS"/>
    <property type="molecule type" value="mRNA"/>
</dbReference>
<dbReference type="RefSeq" id="NP_001178594.1">
    <property type="nucleotide sequence ID" value="NM_001191665.1"/>
</dbReference>
<dbReference type="SMR" id="D3ZUQ0"/>
<dbReference type="BioGRID" id="257870">
    <property type="interactions" value="2"/>
</dbReference>
<dbReference type="FunCoup" id="D3ZUQ0">
    <property type="interactions" value="833"/>
</dbReference>
<dbReference type="STRING" id="10116.ENSRNOP00000001401"/>
<dbReference type="iPTMnet" id="D3ZUQ0"/>
<dbReference type="PhosphoSitePlus" id="D3ZUQ0"/>
<dbReference type="jPOST" id="D3ZUQ0"/>
<dbReference type="PaxDb" id="10116-ENSRNOP00000001401"/>
<dbReference type="PeptideAtlas" id="D3ZUQ0"/>
<dbReference type="GeneID" id="304469"/>
<dbReference type="KEGG" id="rno:304469"/>
<dbReference type="UCSC" id="RGD:1307973">
    <property type="organism name" value="rat"/>
</dbReference>
<dbReference type="AGR" id="RGD:1307973"/>
<dbReference type="CTD" id="353116"/>
<dbReference type="RGD" id="1307973">
    <property type="gene designation" value="Rilpl1"/>
</dbReference>
<dbReference type="VEuPathDB" id="HostDB:ENSRNOG00000001055"/>
<dbReference type="eggNOG" id="ENOG502QR9G">
    <property type="taxonomic scope" value="Eukaryota"/>
</dbReference>
<dbReference type="HOGENOM" id="CLU_044133_3_0_1"/>
<dbReference type="InParanoid" id="D3ZUQ0"/>
<dbReference type="OrthoDB" id="10069524at2759"/>
<dbReference type="PhylomeDB" id="D3ZUQ0"/>
<dbReference type="TreeFam" id="TF313489"/>
<dbReference type="PRO" id="PR:D3ZUQ0"/>
<dbReference type="Proteomes" id="UP000002494">
    <property type="component" value="Chromosome 12"/>
</dbReference>
<dbReference type="Bgee" id="ENSRNOG00000001055">
    <property type="expression patterns" value="Expressed in skeletal muscle tissue and 20 other cell types or tissues"/>
</dbReference>
<dbReference type="ExpressionAtlas" id="D3ZUQ0">
    <property type="expression patterns" value="baseline and differential"/>
</dbReference>
<dbReference type="GO" id="GO:0005814">
    <property type="term" value="C:centriole"/>
    <property type="evidence" value="ECO:0007669"/>
    <property type="project" value="UniProtKB-SubCell"/>
</dbReference>
<dbReference type="GO" id="GO:0005813">
    <property type="term" value="C:centrosome"/>
    <property type="evidence" value="ECO:0000250"/>
    <property type="project" value="UniProtKB"/>
</dbReference>
<dbReference type="GO" id="GO:0036064">
    <property type="term" value="C:ciliary basal body"/>
    <property type="evidence" value="ECO:0000318"/>
    <property type="project" value="GO_Central"/>
</dbReference>
<dbReference type="GO" id="GO:0005929">
    <property type="term" value="C:cilium"/>
    <property type="evidence" value="ECO:0000250"/>
    <property type="project" value="UniProtKB"/>
</dbReference>
<dbReference type="GO" id="GO:0005737">
    <property type="term" value="C:cytoplasm"/>
    <property type="evidence" value="ECO:0000318"/>
    <property type="project" value="GO_Central"/>
</dbReference>
<dbReference type="GO" id="GO:0005829">
    <property type="term" value="C:cytosol"/>
    <property type="evidence" value="ECO:0000314"/>
    <property type="project" value="UniProtKB"/>
</dbReference>
<dbReference type="GO" id="GO:0016020">
    <property type="term" value="C:membrane"/>
    <property type="evidence" value="ECO:0007669"/>
    <property type="project" value="GOC"/>
</dbReference>
<dbReference type="GO" id="GO:0051959">
    <property type="term" value="F:dynein light intermediate chain binding"/>
    <property type="evidence" value="ECO:0000318"/>
    <property type="project" value="GO_Central"/>
</dbReference>
<dbReference type="GO" id="GO:0046983">
    <property type="term" value="F:protein dimerization activity"/>
    <property type="evidence" value="ECO:0007669"/>
    <property type="project" value="InterPro"/>
</dbReference>
<dbReference type="GO" id="GO:0031267">
    <property type="term" value="F:small GTPase binding"/>
    <property type="evidence" value="ECO:0000318"/>
    <property type="project" value="GO_Central"/>
</dbReference>
<dbReference type="GO" id="GO:0060271">
    <property type="term" value="P:cilium assembly"/>
    <property type="evidence" value="ECO:0000318"/>
    <property type="project" value="GO_Central"/>
</dbReference>
<dbReference type="GO" id="GO:0003382">
    <property type="term" value="P:epithelial cell morphogenesis"/>
    <property type="evidence" value="ECO:0000250"/>
    <property type="project" value="UniProtKB"/>
</dbReference>
<dbReference type="GO" id="GO:0007263">
    <property type="term" value="P:nitric oxide mediated signal transduction"/>
    <property type="evidence" value="ECO:0000314"/>
    <property type="project" value="UniProtKB"/>
</dbReference>
<dbReference type="GO" id="GO:1903445">
    <property type="term" value="P:protein transport from ciliary membrane to plasma membrane"/>
    <property type="evidence" value="ECO:0000250"/>
    <property type="project" value="UniProtKB"/>
</dbReference>
<dbReference type="CDD" id="cd14445">
    <property type="entry name" value="RILP-like"/>
    <property type="match status" value="1"/>
</dbReference>
<dbReference type="FunFam" id="1.20.58.1770:FF:000002">
    <property type="entry name" value="RILP-like protein 1 isoform X1"/>
    <property type="match status" value="1"/>
</dbReference>
<dbReference type="Gene3D" id="1.20.58.1770">
    <property type="match status" value="1"/>
</dbReference>
<dbReference type="Gene3D" id="6.10.230.10">
    <property type="match status" value="1"/>
</dbReference>
<dbReference type="InterPro" id="IPR051241">
    <property type="entry name" value="DZIP_RILPL"/>
</dbReference>
<dbReference type="InterPro" id="IPR034743">
    <property type="entry name" value="RH1"/>
</dbReference>
<dbReference type="InterPro" id="IPR034744">
    <property type="entry name" value="RH2"/>
</dbReference>
<dbReference type="InterPro" id="IPR021563">
    <property type="entry name" value="RILP_dimer"/>
</dbReference>
<dbReference type="PANTHER" id="PTHR21502:SF6">
    <property type="entry name" value="RILP-LIKE PROTEIN 1"/>
    <property type="match status" value="1"/>
</dbReference>
<dbReference type="PANTHER" id="PTHR21502">
    <property type="entry name" value="ZINC FINGER PROTEIN DZIP1"/>
    <property type="match status" value="1"/>
</dbReference>
<dbReference type="Pfam" id="PF09744">
    <property type="entry name" value="RH1"/>
    <property type="match status" value="1"/>
</dbReference>
<dbReference type="Pfam" id="PF11461">
    <property type="entry name" value="RILP"/>
    <property type="match status" value="1"/>
</dbReference>
<dbReference type="SUPFAM" id="SSF161256">
    <property type="entry name" value="RILP dimerisation region"/>
    <property type="match status" value="1"/>
</dbReference>
<dbReference type="PROSITE" id="PS51776">
    <property type="entry name" value="RH1"/>
    <property type="match status" value="1"/>
</dbReference>
<dbReference type="PROSITE" id="PS51777">
    <property type="entry name" value="RH2"/>
    <property type="match status" value="1"/>
</dbReference>
<feature type="chain" id="PRO_0000403768" description="RILP-like protein 1">
    <location>
        <begin position="1"/>
        <end position="406"/>
    </location>
</feature>
<feature type="domain" description="RH1" evidence="4">
    <location>
        <begin position="10"/>
        <end position="97"/>
    </location>
</feature>
<feature type="domain" description="RH2" evidence="5">
    <location>
        <begin position="294"/>
        <end position="359"/>
    </location>
</feature>
<feature type="region of interest" description="Disordered" evidence="6">
    <location>
        <begin position="255"/>
        <end position="280"/>
    </location>
</feature>
<feature type="region of interest" description="Disordered" evidence="6">
    <location>
        <begin position="330"/>
        <end position="354"/>
    </location>
</feature>
<feature type="coiled-coil region" evidence="3">
    <location>
        <begin position="76"/>
        <end position="258"/>
    </location>
</feature>
<feature type="compositionally biased region" description="Acidic residues" evidence="6">
    <location>
        <begin position="262"/>
        <end position="280"/>
    </location>
</feature>
<feature type="modified residue" description="Phosphoserine" evidence="10">
    <location>
        <position position="7"/>
    </location>
</feature>
<feature type="modified residue" description="S-nitrosocysteine" evidence="7">
    <location>
        <position position="47"/>
    </location>
</feature>
<feature type="modified residue" description="Phosphoserine" evidence="1">
    <location>
        <position position="259"/>
    </location>
</feature>
<feature type="mutagenesis site" description="Abolishes S-nitrosylation and subsequent interaction with GAPDH." evidence="7">
    <original>C</original>
    <variation>S</variation>
    <location>
        <position position="47"/>
    </location>
</feature>
<feature type="sequence conflict" description="In Ref. 2; CK357616." evidence="9" ref="2">
    <original>E</original>
    <variation>D</variation>
    <location>
        <position position="276"/>
    </location>
</feature>
<evidence type="ECO:0000250" key="1">
    <source>
        <dbReference type="UniProtKB" id="Q5EBL4"/>
    </source>
</evidence>
<evidence type="ECO:0000250" key="2">
    <source>
        <dbReference type="UniProtKB" id="Q9JJC6"/>
    </source>
</evidence>
<evidence type="ECO:0000255" key="3"/>
<evidence type="ECO:0000255" key="4">
    <source>
        <dbReference type="PROSITE-ProRule" id="PRU01112"/>
    </source>
</evidence>
<evidence type="ECO:0000255" key="5">
    <source>
        <dbReference type="PROSITE-ProRule" id="PRU01113"/>
    </source>
</evidence>
<evidence type="ECO:0000256" key="6">
    <source>
        <dbReference type="SAM" id="MobiDB-lite"/>
    </source>
</evidence>
<evidence type="ECO:0000269" key="7">
    <source>
    </source>
</evidence>
<evidence type="ECO:0000269" key="8">
    <source>
    </source>
</evidence>
<evidence type="ECO:0000305" key="9"/>
<evidence type="ECO:0007744" key="10">
    <source>
    </source>
</evidence>
<comment type="function">
    <text evidence="1 2 7">Plays a role in the regulation of cell shape and polarity (By similarity). Plays a role in cellular protein transport, including protein transport away from primary cilia (By similarity). Neuroprotective protein, which acts by sequestring GAPDH in the cytosol and prevent the apoptotic function of GAPDH in the nucleus (PubMed:19607794). Competes with SIAH1 for binding GAPDH (PubMed:19607794). Does not regulate lysosomal morphology and distribution (By similarity). Binds to RAB10 following LRRK2-mediated RAB10 phosphorylation which leads to inhibition of ciliogenesis (By similarity).</text>
</comment>
<comment type="subunit">
    <text evidence="1 7">Interacts (when S-nitrosylated) with GAPDH (PubMed:19607794). Interacts with RAB8A; interaction is dependent on the phosphorylation of 'Thr-72' of RAB8A (By similarity). Interacts with RAB10 and RAB12; the interaction is dependent on the phosphorylation of 'Thr-73' of RAB10, and 'Ser-105' of RAB12 (By similarity).</text>
</comment>
<comment type="subcellular location">
    <subcellularLocation>
        <location evidence="7">Cytoplasm</location>
        <location evidence="7">Cytosol</location>
    </subcellularLocation>
    <subcellularLocation>
        <location evidence="8">Cytoplasm</location>
        <location evidence="8">Cytoskeleton</location>
        <location evidence="8">Microtubule organizing center</location>
        <location evidence="8">Centrosome</location>
        <location evidence="8">Centriole</location>
    </subcellularLocation>
    <subcellularLocation>
        <location evidence="8">Cytoplasm</location>
        <location evidence="8">Cytoskeleton</location>
        <location evidence="8">Cilium basal body</location>
    </subcellularLocation>
</comment>
<comment type="tissue specificity">
    <text evidence="7">Highly expressed in heart, skeletal muscle, brain and lung (at protein level).</text>
</comment>
<comment type="PTM">
    <text evidence="7">S-nitrosylation is required for the interaction with GAPDH.</text>
</comment>
<comment type="similarity">
    <text evidence="9">Belongs to the RILPL family.</text>
</comment>
<comment type="sequence caution" evidence="9">
    <conflict type="frameshift">
        <sequence resource="EMBL" id="CK357616"/>
    </conflict>
</comment>
<comment type="sequence caution" evidence="9">
    <conflict type="frameshift">
        <sequence resource="EMBL" id="CK600354"/>
    </conflict>
</comment>
<accession>D3ZUQ0</accession>
<protein>
    <recommendedName>
        <fullName>RILP-like protein 1</fullName>
    </recommendedName>
    <alternativeName>
        <fullName>GAPDH's competitor of SIAH1 protein enhances life</fullName>
        <shortName>GOSPEL</shortName>
    </alternativeName>
    <alternativeName>
        <fullName>Rab-interacting lysosomal-like protein 1</fullName>
    </alternativeName>
</protein>
<sequence>MEEPLGSPPAALSALEKNVAELTVMDVYDIASLVGHEFERVIDQHGCEAIARLMPKVVRVLEILEVLVSRHHVAPELDELRLELDRLRVERMDRIEKERKHQKELELVEDVWRGEAQDLLSQIAQLQEENKQLMTNLNHKDVGFSEEELQKHEGMSERERQVMKRLKEVVDKQRDEIRAKDRELVLKNEDVEALQQQQTRLMKINHDLRHRVTVVEAQGKALIEQKVELEADLQTKEQEMGSLRAELGKLRERLQGEHSQNGEEEEAEIPPQPDGEESISDAEKAALDLKDPNRPRFTLQELRDVLHERNELKSKVFLLQEELAYYKSEEIEEENRIPQPPPITHPRTSPQPESGIKRLFSFFSRDKRRLANTQRPTHIHESFGQWAITHRDDGYTEQGQEALQHL</sequence>
<proteinExistence type="evidence at protein level"/>
<name>RIPL1_RAT</name>
<gene>
    <name type="primary">Rilpl1</name>
</gene>
<keyword id="KW-0966">Cell projection</keyword>
<keyword id="KW-0969">Cilium</keyword>
<keyword id="KW-0175">Coiled coil</keyword>
<keyword id="KW-0963">Cytoplasm</keyword>
<keyword id="KW-0206">Cytoskeleton</keyword>
<keyword id="KW-0597">Phosphoprotein</keyword>
<keyword id="KW-0653">Protein transport</keyword>
<keyword id="KW-1185">Reference proteome</keyword>
<keyword id="KW-0702">S-nitrosylation</keyword>
<keyword id="KW-0813">Transport</keyword>